<sequence>MSDTAEQRWSVYLIRNNRNALYCGVTNDVERRFNQHQSGKGAKALKGKGPLVLEWSCAFENKSMAMKAEYFIKQLTKTKKELLVQESAVIQVGEGQSFVFYSRK</sequence>
<comment type="similarity">
    <text evidence="2">Belongs to the UPF0213 family.</text>
</comment>
<accession>A7N3Z0</accession>
<dbReference type="EMBL" id="CP000790">
    <property type="protein sequence ID" value="ABU73255.1"/>
    <property type="molecule type" value="Genomic_DNA"/>
</dbReference>
<dbReference type="RefSeq" id="WP_012129028.1">
    <property type="nucleotide sequence ID" value="NC_022270.1"/>
</dbReference>
<dbReference type="SMR" id="A7N3Z0"/>
<dbReference type="KEGG" id="vha:VIBHAR_05350"/>
<dbReference type="PATRIC" id="fig|338187.25.peg.4884"/>
<dbReference type="Proteomes" id="UP000008152">
    <property type="component" value="Chromosome II"/>
</dbReference>
<dbReference type="CDD" id="cd10456">
    <property type="entry name" value="GIY-YIG_UPF0213"/>
    <property type="match status" value="1"/>
</dbReference>
<dbReference type="Gene3D" id="3.40.1440.10">
    <property type="entry name" value="GIY-YIG endonuclease"/>
    <property type="match status" value="1"/>
</dbReference>
<dbReference type="InterPro" id="IPR000305">
    <property type="entry name" value="GIY-YIG_endonuc"/>
</dbReference>
<dbReference type="InterPro" id="IPR035901">
    <property type="entry name" value="GIY-YIG_endonuc_sf"/>
</dbReference>
<dbReference type="InterPro" id="IPR050190">
    <property type="entry name" value="UPF0213_domain"/>
</dbReference>
<dbReference type="PANTHER" id="PTHR34477">
    <property type="entry name" value="UPF0213 PROTEIN YHBQ"/>
    <property type="match status" value="1"/>
</dbReference>
<dbReference type="PANTHER" id="PTHR34477:SF1">
    <property type="entry name" value="UPF0213 PROTEIN YHBQ"/>
    <property type="match status" value="1"/>
</dbReference>
<dbReference type="Pfam" id="PF01541">
    <property type="entry name" value="GIY-YIG"/>
    <property type="match status" value="1"/>
</dbReference>
<dbReference type="SMART" id="SM00465">
    <property type="entry name" value="GIYc"/>
    <property type="match status" value="1"/>
</dbReference>
<dbReference type="SUPFAM" id="SSF82771">
    <property type="entry name" value="GIY-YIG endonuclease"/>
    <property type="match status" value="1"/>
</dbReference>
<dbReference type="PROSITE" id="PS50164">
    <property type="entry name" value="GIY_YIG"/>
    <property type="match status" value="1"/>
</dbReference>
<protein>
    <recommendedName>
        <fullName>UPF0213 protein VIBHAR_05350</fullName>
    </recommendedName>
</protein>
<organism>
    <name type="scientific">Vibrio campbellii (strain ATCC BAA-1116)</name>
    <dbReference type="NCBI Taxonomy" id="2902295"/>
    <lineage>
        <taxon>Bacteria</taxon>
        <taxon>Pseudomonadati</taxon>
        <taxon>Pseudomonadota</taxon>
        <taxon>Gammaproteobacteria</taxon>
        <taxon>Vibrionales</taxon>
        <taxon>Vibrionaceae</taxon>
        <taxon>Vibrio</taxon>
    </lineage>
</organism>
<reference key="1">
    <citation type="submission" date="2007-08" db="EMBL/GenBank/DDBJ databases">
        <authorList>
            <consortium name="The Vibrio harveyi Genome Sequencing Project"/>
            <person name="Bassler B."/>
            <person name="Clifton S.W."/>
            <person name="Fulton L."/>
            <person name="Delehaunty K."/>
            <person name="Fronick C."/>
            <person name="Harrison M."/>
            <person name="Markivic C."/>
            <person name="Fulton R."/>
            <person name="Tin-Wollam A.-M."/>
            <person name="Shah N."/>
            <person name="Pepin K."/>
            <person name="Nash W."/>
            <person name="Thiruvilangam P."/>
            <person name="Bhonagiri V."/>
            <person name="Waters C."/>
            <person name="Tu K.C."/>
            <person name="Irgon J."/>
            <person name="Wilson R.K."/>
        </authorList>
    </citation>
    <scope>NUCLEOTIDE SEQUENCE [LARGE SCALE GENOMIC DNA]</scope>
    <source>
        <strain>ATCC BAA-1116 / BB120</strain>
    </source>
</reference>
<feature type="chain" id="PRO_1000063699" description="UPF0213 protein VIBHAR_05350">
    <location>
        <begin position="1"/>
        <end position="104"/>
    </location>
</feature>
<feature type="domain" description="GIY-YIG" evidence="1">
    <location>
        <begin position="7"/>
        <end position="82"/>
    </location>
</feature>
<evidence type="ECO:0000255" key="1">
    <source>
        <dbReference type="PROSITE-ProRule" id="PRU00977"/>
    </source>
</evidence>
<evidence type="ECO:0000305" key="2"/>
<name>Y5350_VIBC1</name>
<proteinExistence type="inferred from homology"/>
<gene>
    <name type="ordered locus">VIBHAR_05350</name>
</gene>